<evidence type="ECO:0000255" key="1">
    <source>
        <dbReference type="HAMAP-Rule" id="MF_00379"/>
    </source>
</evidence>
<name>MNME_SALTI</name>
<reference key="1">
    <citation type="journal article" date="2001" name="Nature">
        <title>Complete genome sequence of a multiple drug resistant Salmonella enterica serovar Typhi CT18.</title>
        <authorList>
            <person name="Parkhill J."/>
            <person name="Dougan G."/>
            <person name="James K.D."/>
            <person name="Thomson N.R."/>
            <person name="Pickard D."/>
            <person name="Wain J."/>
            <person name="Churcher C.M."/>
            <person name="Mungall K.L."/>
            <person name="Bentley S.D."/>
            <person name="Holden M.T.G."/>
            <person name="Sebaihia M."/>
            <person name="Baker S."/>
            <person name="Basham D."/>
            <person name="Brooks K."/>
            <person name="Chillingworth T."/>
            <person name="Connerton P."/>
            <person name="Cronin A."/>
            <person name="Davis P."/>
            <person name="Davies R.M."/>
            <person name="Dowd L."/>
            <person name="White N."/>
            <person name="Farrar J."/>
            <person name="Feltwell T."/>
            <person name="Hamlin N."/>
            <person name="Haque A."/>
            <person name="Hien T.T."/>
            <person name="Holroyd S."/>
            <person name="Jagels K."/>
            <person name="Krogh A."/>
            <person name="Larsen T.S."/>
            <person name="Leather S."/>
            <person name="Moule S."/>
            <person name="O'Gaora P."/>
            <person name="Parry C."/>
            <person name="Quail M.A."/>
            <person name="Rutherford K.M."/>
            <person name="Simmonds M."/>
            <person name="Skelton J."/>
            <person name="Stevens K."/>
            <person name="Whitehead S."/>
            <person name="Barrell B.G."/>
        </authorList>
    </citation>
    <scope>NUCLEOTIDE SEQUENCE [LARGE SCALE GENOMIC DNA]</scope>
    <source>
        <strain>CT18</strain>
    </source>
</reference>
<reference key="2">
    <citation type="journal article" date="2003" name="J. Bacteriol.">
        <title>Comparative genomics of Salmonella enterica serovar Typhi strains Ty2 and CT18.</title>
        <authorList>
            <person name="Deng W."/>
            <person name="Liou S.-R."/>
            <person name="Plunkett G. III"/>
            <person name="Mayhew G.F."/>
            <person name="Rose D.J."/>
            <person name="Burland V."/>
            <person name="Kodoyianni V."/>
            <person name="Schwartz D.C."/>
            <person name="Blattner F.R."/>
        </authorList>
    </citation>
    <scope>NUCLEOTIDE SEQUENCE [LARGE SCALE GENOMIC DNA]</scope>
    <source>
        <strain>ATCC 700931 / Ty2</strain>
    </source>
</reference>
<proteinExistence type="inferred from homology"/>
<organism>
    <name type="scientific">Salmonella typhi</name>
    <dbReference type="NCBI Taxonomy" id="90370"/>
    <lineage>
        <taxon>Bacteria</taxon>
        <taxon>Pseudomonadati</taxon>
        <taxon>Pseudomonadota</taxon>
        <taxon>Gammaproteobacteria</taxon>
        <taxon>Enterobacterales</taxon>
        <taxon>Enterobacteriaceae</taxon>
        <taxon>Salmonella</taxon>
    </lineage>
</organism>
<sequence>MSHNDTIVAQATPPGRGGVGILRISGLKARDVAQEVLGKLPKPRYADYLPFKDVDGSALDQGIALWFPGPNSFTGEDVLELQGHGGPVILDLLLKRILTLPGVRIARPGEFSERAFLNDKLDLAQAEAIADLIDASSEQAARSALNSLQGAFSARVNHLVEALTHLRIYVEAAIDFPDEEIDFLSDGKIEAQLNGVIADLDAVRTEARQGSLLREGMKVVIAGRPNAGKSSLLNALAGREAAIVTDIAGTTRDVLREHIHIDGMPLHIIDTAGLRDANDEVERIGIERAWQEIEQADRVLFMVDGTTTDAVDPADIWPDFIARLPKNLPITVVRNKADITGETLGISEVNGHSLVRLSARTGEGVDVLRNHLKQSMGFDTNMEGGFLARRRHLQALAEAANHLEQGKAQLLGAWAGELLAEELRLAQQSLSEITGEFTSDDLLGRIFSSFCIGK</sequence>
<feature type="chain" id="PRO_0000188911" description="tRNA modification GTPase MnmE">
    <location>
        <begin position="1"/>
        <end position="454"/>
    </location>
</feature>
<feature type="domain" description="TrmE-type G">
    <location>
        <begin position="216"/>
        <end position="377"/>
    </location>
</feature>
<feature type="binding site" evidence="1">
    <location>
        <position position="23"/>
    </location>
    <ligand>
        <name>(6S)-5-formyl-5,6,7,8-tetrahydrofolate</name>
        <dbReference type="ChEBI" id="CHEBI:57457"/>
    </ligand>
</feature>
<feature type="binding site" evidence="1">
    <location>
        <position position="80"/>
    </location>
    <ligand>
        <name>(6S)-5-formyl-5,6,7,8-tetrahydrofolate</name>
        <dbReference type="ChEBI" id="CHEBI:57457"/>
    </ligand>
</feature>
<feature type="binding site" evidence="1">
    <location>
        <position position="120"/>
    </location>
    <ligand>
        <name>(6S)-5-formyl-5,6,7,8-tetrahydrofolate</name>
        <dbReference type="ChEBI" id="CHEBI:57457"/>
    </ligand>
</feature>
<feature type="binding site" evidence="1">
    <location>
        <begin position="226"/>
        <end position="231"/>
    </location>
    <ligand>
        <name>GTP</name>
        <dbReference type="ChEBI" id="CHEBI:37565"/>
    </ligand>
</feature>
<feature type="binding site" evidence="1">
    <location>
        <position position="226"/>
    </location>
    <ligand>
        <name>K(+)</name>
        <dbReference type="ChEBI" id="CHEBI:29103"/>
    </ligand>
</feature>
<feature type="binding site" evidence="1">
    <location>
        <position position="230"/>
    </location>
    <ligand>
        <name>Mg(2+)</name>
        <dbReference type="ChEBI" id="CHEBI:18420"/>
    </ligand>
</feature>
<feature type="binding site" evidence="1">
    <location>
        <begin position="245"/>
        <end position="251"/>
    </location>
    <ligand>
        <name>GTP</name>
        <dbReference type="ChEBI" id="CHEBI:37565"/>
    </ligand>
</feature>
<feature type="binding site" evidence="1">
    <location>
        <position position="245"/>
    </location>
    <ligand>
        <name>K(+)</name>
        <dbReference type="ChEBI" id="CHEBI:29103"/>
    </ligand>
</feature>
<feature type="binding site" evidence="1">
    <location>
        <position position="247"/>
    </location>
    <ligand>
        <name>K(+)</name>
        <dbReference type="ChEBI" id="CHEBI:29103"/>
    </ligand>
</feature>
<feature type="binding site" evidence="1">
    <location>
        <position position="250"/>
    </location>
    <ligand>
        <name>K(+)</name>
        <dbReference type="ChEBI" id="CHEBI:29103"/>
    </ligand>
</feature>
<feature type="binding site" evidence="1">
    <location>
        <position position="251"/>
    </location>
    <ligand>
        <name>Mg(2+)</name>
        <dbReference type="ChEBI" id="CHEBI:18420"/>
    </ligand>
</feature>
<feature type="binding site" evidence="1">
    <location>
        <begin position="270"/>
        <end position="273"/>
    </location>
    <ligand>
        <name>GTP</name>
        <dbReference type="ChEBI" id="CHEBI:37565"/>
    </ligand>
</feature>
<feature type="binding site" evidence="1">
    <location>
        <begin position="335"/>
        <end position="338"/>
    </location>
    <ligand>
        <name>GTP</name>
        <dbReference type="ChEBI" id="CHEBI:37565"/>
    </ligand>
</feature>
<feature type="binding site" evidence="1">
    <location>
        <begin position="358"/>
        <end position="360"/>
    </location>
    <ligand>
        <name>GTP</name>
        <dbReference type="ChEBI" id="CHEBI:37565"/>
    </ligand>
</feature>
<feature type="binding site" evidence="1">
    <location>
        <position position="454"/>
    </location>
    <ligand>
        <name>(6S)-5-formyl-5,6,7,8-tetrahydrofolate</name>
        <dbReference type="ChEBI" id="CHEBI:57457"/>
    </ligand>
</feature>
<comment type="function">
    <text evidence="1">Exhibits a very high intrinsic GTPase hydrolysis rate. Involved in the addition of a carboxymethylaminomethyl (cmnm) group at the wobble position (U34) of certain tRNAs, forming tRNA-cmnm(5)s(2)U34.</text>
</comment>
<comment type="cofactor">
    <cofactor evidence="1">
        <name>K(+)</name>
        <dbReference type="ChEBI" id="CHEBI:29103"/>
    </cofactor>
    <text evidence="1">Binds 1 potassium ion per subunit.</text>
</comment>
<comment type="subunit">
    <text evidence="1">Homodimer. Heterotetramer of two MnmE and two MnmG subunits.</text>
</comment>
<comment type="subcellular location">
    <subcellularLocation>
        <location evidence="1">Cytoplasm</location>
    </subcellularLocation>
</comment>
<comment type="similarity">
    <text evidence="1">Belongs to the TRAFAC class TrmE-Era-EngA-EngB-Septin-like GTPase superfamily. TrmE GTPase family.</text>
</comment>
<protein>
    <recommendedName>
        <fullName evidence="1">tRNA modification GTPase MnmE</fullName>
        <ecNumber evidence="1">3.6.-.-</ecNumber>
    </recommendedName>
</protein>
<keyword id="KW-0963">Cytoplasm</keyword>
<keyword id="KW-0342">GTP-binding</keyword>
<keyword id="KW-0378">Hydrolase</keyword>
<keyword id="KW-0460">Magnesium</keyword>
<keyword id="KW-0479">Metal-binding</keyword>
<keyword id="KW-0547">Nucleotide-binding</keyword>
<keyword id="KW-0630">Potassium</keyword>
<keyword id="KW-0819">tRNA processing</keyword>
<dbReference type="EC" id="3.6.-.-" evidence="1"/>
<dbReference type="EMBL" id="AL513382">
    <property type="protein sequence ID" value="CAD03153.1"/>
    <property type="molecule type" value="Genomic_DNA"/>
</dbReference>
<dbReference type="EMBL" id="AE014613">
    <property type="protein sequence ID" value="AAO71173.1"/>
    <property type="molecule type" value="Genomic_DNA"/>
</dbReference>
<dbReference type="RefSeq" id="NP_458100.1">
    <property type="nucleotide sequence ID" value="NC_003198.1"/>
</dbReference>
<dbReference type="RefSeq" id="WP_000019075.1">
    <property type="nucleotide sequence ID" value="NZ_WSUR01000023.1"/>
</dbReference>
<dbReference type="SMR" id="Q8Z2N8"/>
<dbReference type="STRING" id="220341.gene:17587796"/>
<dbReference type="KEGG" id="stt:t3677"/>
<dbReference type="KEGG" id="sty:STY3937"/>
<dbReference type="PATRIC" id="fig|220341.7.peg.4017"/>
<dbReference type="eggNOG" id="COG0486">
    <property type="taxonomic scope" value="Bacteria"/>
</dbReference>
<dbReference type="HOGENOM" id="CLU_019624_4_1_6"/>
<dbReference type="OMA" id="EFHCHGG"/>
<dbReference type="OrthoDB" id="9805918at2"/>
<dbReference type="Proteomes" id="UP000000541">
    <property type="component" value="Chromosome"/>
</dbReference>
<dbReference type="Proteomes" id="UP000002670">
    <property type="component" value="Chromosome"/>
</dbReference>
<dbReference type="GO" id="GO:0005829">
    <property type="term" value="C:cytosol"/>
    <property type="evidence" value="ECO:0007669"/>
    <property type="project" value="TreeGrafter"/>
</dbReference>
<dbReference type="GO" id="GO:0005525">
    <property type="term" value="F:GTP binding"/>
    <property type="evidence" value="ECO:0007669"/>
    <property type="project" value="UniProtKB-UniRule"/>
</dbReference>
<dbReference type="GO" id="GO:0003924">
    <property type="term" value="F:GTPase activity"/>
    <property type="evidence" value="ECO:0007669"/>
    <property type="project" value="UniProtKB-UniRule"/>
</dbReference>
<dbReference type="GO" id="GO:0046872">
    <property type="term" value="F:metal ion binding"/>
    <property type="evidence" value="ECO:0007669"/>
    <property type="project" value="UniProtKB-KW"/>
</dbReference>
<dbReference type="GO" id="GO:0030488">
    <property type="term" value="P:tRNA methylation"/>
    <property type="evidence" value="ECO:0007669"/>
    <property type="project" value="TreeGrafter"/>
</dbReference>
<dbReference type="GO" id="GO:0002098">
    <property type="term" value="P:tRNA wobble uridine modification"/>
    <property type="evidence" value="ECO:0007669"/>
    <property type="project" value="TreeGrafter"/>
</dbReference>
<dbReference type="CDD" id="cd04164">
    <property type="entry name" value="trmE"/>
    <property type="match status" value="1"/>
</dbReference>
<dbReference type="CDD" id="cd14858">
    <property type="entry name" value="TrmE_N"/>
    <property type="match status" value="1"/>
</dbReference>
<dbReference type="FunFam" id="3.30.1360.120:FF:000001">
    <property type="entry name" value="tRNA modification GTPase MnmE"/>
    <property type="match status" value="1"/>
</dbReference>
<dbReference type="FunFam" id="3.40.50.300:FF:000249">
    <property type="entry name" value="tRNA modification GTPase MnmE"/>
    <property type="match status" value="1"/>
</dbReference>
<dbReference type="Gene3D" id="3.40.50.300">
    <property type="entry name" value="P-loop containing nucleotide triphosphate hydrolases"/>
    <property type="match status" value="1"/>
</dbReference>
<dbReference type="Gene3D" id="3.30.1360.120">
    <property type="entry name" value="Probable tRNA modification gtpase trme, domain 1"/>
    <property type="match status" value="1"/>
</dbReference>
<dbReference type="Gene3D" id="1.20.120.430">
    <property type="entry name" value="tRNA modification GTPase MnmE domain 2"/>
    <property type="match status" value="1"/>
</dbReference>
<dbReference type="HAMAP" id="MF_00379">
    <property type="entry name" value="GTPase_MnmE"/>
    <property type="match status" value="1"/>
</dbReference>
<dbReference type="InterPro" id="IPR031168">
    <property type="entry name" value="G_TrmE"/>
</dbReference>
<dbReference type="InterPro" id="IPR006073">
    <property type="entry name" value="GTP-bd"/>
</dbReference>
<dbReference type="InterPro" id="IPR018948">
    <property type="entry name" value="GTP-bd_TrmE_N"/>
</dbReference>
<dbReference type="InterPro" id="IPR004520">
    <property type="entry name" value="GTPase_MnmE"/>
</dbReference>
<dbReference type="InterPro" id="IPR027368">
    <property type="entry name" value="MnmE_dom2"/>
</dbReference>
<dbReference type="InterPro" id="IPR025867">
    <property type="entry name" value="MnmE_helical"/>
</dbReference>
<dbReference type="InterPro" id="IPR027417">
    <property type="entry name" value="P-loop_NTPase"/>
</dbReference>
<dbReference type="InterPro" id="IPR005225">
    <property type="entry name" value="Small_GTP-bd"/>
</dbReference>
<dbReference type="InterPro" id="IPR027266">
    <property type="entry name" value="TrmE/GcvT_dom1"/>
</dbReference>
<dbReference type="NCBIfam" id="TIGR00450">
    <property type="entry name" value="mnmE_trmE_thdF"/>
    <property type="match status" value="1"/>
</dbReference>
<dbReference type="NCBIfam" id="NF003661">
    <property type="entry name" value="PRK05291.1-3"/>
    <property type="match status" value="1"/>
</dbReference>
<dbReference type="NCBIfam" id="TIGR00231">
    <property type="entry name" value="small_GTP"/>
    <property type="match status" value="1"/>
</dbReference>
<dbReference type="PANTHER" id="PTHR42714">
    <property type="entry name" value="TRNA MODIFICATION GTPASE GTPBP3"/>
    <property type="match status" value="1"/>
</dbReference>
<dbReference type="PANTHER" id="PTHR42714:SF2">
    <property type="entry name" value="TRNA MODIFICATION GTPASE GTPBP3, MITOCHONDRIAL"/>
    <property type="match status" value="1"/>
</dbReference>
<dbReference type="Pfam" id="PF01926">
    <property type="entry name" value="MMR_HSR1"/>
    <property type="match status" value="1"/>
</dbReference>
<dbReference type="Pfam" id="PF12631">
    <property type="entry name" value="MnmE_helical"/>
    <property type="match status" value="1"/>
</dbReference>
<dbReference type="Pfam" id="PF10396">
    <property type="entry name" value="TrmE_N"/>
    <property type="match status" value="1"/>
</dbReference>
<dbReference type="SUPFAM" id="SSF52540">
    <property type="entry name" value="P-loop containing nucleoside triphosphate hydrolases"/>
    <property type="match status" value="1"/>
</dbReference>
<dbReference type="SUPFAM" id="SSF116878">
    <property type="entry name" value="TrmE connector domain"/>
    <property type="match status" value="1"/>
</dbReference>
<dbReference type="PROSITE" id="PS51709">
    <property type="entry name" value="G_TRME"/>
    <property type="match status" value="1"/>
</dbReference>
<gene>
    <name evidence="1" type="primary">mnmE</name>
    <name evidence="1" type="synonym">thdF</name>
    <name evidence="1" type="synonym">trmE</name>
    <name type="ordered locus">STY3937</name>
    <name type="ordered locus">t3677</name>
</gene>
<accession>Q8Z2N8</accession>